<name>CP24A_MOUSE</name>
<keyword id="KW-0349">Heme</keyword>
<keyword id="KW-0408">Iron</keyword>
<keyword id="KW-0443">Lipid metabolism</keyword>
<keyword id="KW-0479">Metal-binding</keyword>
<keyword id="KW-0496">Mitochondrion</keyword>
<keyword id="KW-0503">Monooxygenase</keyword>
<keyword id="KW-0560">Oxidoreductase</keyword>
<keyword id="KW-1185">Reference proteome</keyword>
<keyword id="KW-0809">Transit peptide</keyword>
<reference key="1">
    <citation type="journal article" date="1995" name="Biochim. Biophys. Acta">
        <title>Molecular cloning of 25-hydroxyvitamin D-3 24-hydroxylase (Cyp-24) from mouse kidney: its inducibility by vitamin D-3.</title>
        <authorList>
            <person name="Itoh S."/>
            <person name="Yoshimura T."/>
            <person name="Iemura O."/>
            <person name="Yamada E."/>
            <person name="Tsujikawa K."/>
            <person name="Kohama Y."/>
            <person name="Mimura T."/>
        </authorList>
    </citation>
    <scope>NUCLEOTIDE SEQUENCE [MRNA]</scope>
    <source>
        <strain>C57BL/6J</strain>
        <tissue>Kidney</tissue>
    </source>
</reference>
<reference key="2">
    <citation type="journal article" date="1997" name="Endocrinology">
        <title>Mouse vitamin D-24-hydroxylase: molecular cloning, tissue distribution, and transcriptional regulation by 1alpha,25-dihydroxyvitamin D3.</title>
        <authorList>
            <person name="Akeno N."/>
            <person name="Saikatsu S."/>
            <person name="Kawane T."/>
            <person name="Horiuchi N."/>
        </authorList>
    </citation>
    <scope>NUCLEOTIDE SEQUENCE [MRNA]</scope>
    <source>
        <strain>ddY</strain>
        <tissue>Kidney</tissue>
    </source>
</reference>
<reference key="3">
    <citation type="journal article" date="2003" name="Mol. Endocrinol.">
        <title>Klotho, a gene related to a syndrome resembling human premature aging, functions in a negative regulatory circuit of vitamin D endocrine system.</title>
        <authorList>
            <person name="Tsujikawa H."/>
            <person name="Kurotaki Y."/>
            <person name="Fujimori T."/>
            <person name="Fukuda K."/>
            <person name="Nabeshima Y."/>
        </authorList>
    </citation>
    <scope>INDUCTION</scope>
</reference>
<proteinExistence type="evidence at transcript level"/>
<gene>
    <name evidence="4" type="primary">Cyp24a1</name>
    <name type="synonym">Cyp-24</name>
    <name type="synonym">Cyp24</name>
</gene>
<accession>Q64441</accession>
<feature type="transit peptide" description="Mitochondrion" evidence="1">
    <location>
        <begin position="1"/>
        <end position="35"/>
    </location>
</feature>
<feature type="chain" id="PRO_0000003616" description="1,25-dihydroxyvitamin D(3) 24-hydroxylase, mitochondrial">
    <location>
        <begin position="36"/>
        <end position="514"/>
    </location>
</feature>
<feature type="binding site" description="axial binding residue" evidence="1">
    <location>
        <position position="462"/>
    </location>
    <ligand>
        <name>heme</name>
        <dbReference type="ChEBI" id="CHEBI:30413"/>
    </ligand>
    <ligandPart>
        <name>Fe</name>
        <dbReference type="ChEBI" id="CHEBI:18248"/>
    </ligandPart>
</feature>
<protein>
    <recommendedName>
        <fullName>1,25-dihydroxyvitamin D(3) 24-hydroxylase, mitochondrial</fullName>
        <shortName>24-OHase</shortName>
        <shortName>Vitamin D(3) 24-hydroxylase</shortName>
        <ecNumber evidence="1">1.14.15.16</ecNumber>
    </recommendedName>
    <alternativeName>
        <fullName>Cytochrome P450 24A1</fullName>
    </alternativeName>
    <alternativeName>
        <fullName>Cytochrome P450-CC24</fullName>
    </alternativeName>
</protein>
<evidence type="ECO:0000250" key="1">
    <source>
        <dbReference type="UniProtKB" id="Q09128"/>
    </source>
</evidence>
<evidence type="ECO:0000269" key="2">
    <source>
    </source>
</evidence>
<evidence type="ECO:0000305" key="3"/>
<evidence type="ECO:0000312" key="4">
    <source>
        <dbReference type="MGI" id="MGI:88593"/>
    </source>
</evidence>
<organism>
    <name type="scientific">Mus musculus</name>
    <name type="common">Mouse</name>
    <dbReference type="NCBI Taxonomy" id="10090"/>
    <lineage>
        <taxon>Eukaryota</taxon>
        <taxon>Metazoa</taxon>
        <taxon>Chordata</taxon>
        <taxon>Craniata</taxon>
        <taxon>Vertebrata</taxon>
        <taxon>Euteleostomi</taxon>
        <taxon>Mammalia</taxon>
        <taxon>Eutheria</taxon>
        <taxon>Euarchontoglires</taxon>
        <taxon>Glires</taxon>
        <taxon>Rodentia</taxon>
        <taxon>Myomorpha</taxon>
        <taxon>Muroidea</taxon>
        <taxon>Muridae</taxon>
        <taxon>Murinae</taxon>
        <taxon>Mus</taxon>
        <taxon>Mus</taxon>
    </lineage>
</organism>
<dbReference type="EC" id="1.14.15.16" evidence="1"/>
<dbReference type="EMBL" id="D49438">
    <property type="protein sequence ID" value="BAA08416.1"/>
    <property type="molecule type" value="mRNA"/>
</dbReference>
<dbReference type="EMBL" id="D89669">
    <property type="protein sequence ID" value="BAA21843.1"/>
    <property type="molecule type" value="mRNA"/>
</dbReference>
<dbReference type="CCDS" id="CCDS17122.1"/>
<dbReference type="PIR" id="S60033">
    <property type="entry name" value="S60033"/>
</dbReference>
<dbReference type="RefSeq" id="NP_034126.1">
    <property type="nucleotide sequence ID" value="NM_009996.4"/>
</dbReference>
<dbReference type="SMR" id="Q64441"/>
<dbReference type="BioGRID" id="199006">
    <property type="interactions" value="14"/>
</dbReference>
<dbReference type="FunCoup" id="Q64441">
    <property type="interactions" value="927"/>
</dbReference>
<dbReference type="STRING" id="10090.ENSMUSP00000047954"/>
<dbReference type="iPTMnet" id="Q64441"/>
<dbReference type="PhosphoSitePlus" id="Q64441"/>
<dbReference type="PaxDb" id="10090-ENSMUSP00000047954"/>
<dbReference type="ProteomicsDB" id="283437"/>
<dbReference type="Antibodypedia" id="13944">
    <property type="antibodies" value="318 antibodies from 35 providers"/>
</dbReference>
<dbReference type="DNASU" id="13081"/>
<dbReference type="Ensembl" id="ENSMUST00000038824.6">
    <property type="protein sequence ID" value="ENSMUSP00000047954.6"/>
    <property type="gene ID" value="ENSMUSG00000038567.6"/>
</dbReference>
<dbReference type="GeneID" id="13081"/>
<dbReference type="KEGG" id="mmu:13081"/>
<dbReference type="UCSC" id="uc008ocb.1">
    <property type="organism name" value="mouse"/>
</dbReference>
<dbReference type="AGR" id="MGI:88593"/>
<dbReference type="CTD" id="1591"/>
<dbReference type="MGI" id="MGI:88593">
    <property type="gene designation" value="Cyp24a1"/>
</dbReference>
<dbReference type="VEuPathDB" id="HostDB:ENSMUSG00000038567"/>
<dbReference type="eggNOG" id="KOG0159">
    <property type="taxonomic scope" value="Eukaryota"/>
</dbReference>
<dbReference type="GeneTree" id="ENSGT00950000182905"/>
<dbReference type="HOGENOM" id="CLU_001570_28_1_1"/>
<dbReference type="InParanoid" id="Q64441"/>
<dbReference type="OMA" id="VLMINTH"/>
<dbReference type="OrthoDB" id="3945418at2759"/>
<dbReference type="PhylomeDB" id="Q64441"/>
<dbReference type="TreeFam" id="TF105094"/>
<dbReference type="Reactome" id="R-MMU-196791">
    <property type="pathway name" value="Vitamin D (calciferol) metabolism"/>
</dbReference>
<dbReference type="Reactome" id="R-MMU-211916">
    <property type="pathway name" value="Vitamins"/>
</dbReference>
<dbReference type="BioGRID-ORCS" id="13081">
    <property type="hits" value="4 hits in 80 CRISPR screens"/>
</dbReference>
<dbReference type="PRO" id="PR:Q64441"/>
<dbReference type="Proteomes" id="UP000000589">
    <property type="component" value="Chromosome 2"/>
</dbReference>
<dbReference type="RNAct" id="Q64441">
    <property type="molecule type" value="protein"/>
</dbReference>
<dbReference type="Bgee" id="ENSMUSG00000038567">
    <property type="expression patterns" value="Expressed in right kidney and 16 other cell types or tissues"/>
</dbReference>
<dbReference type="ExpressionAtlas" id="Q64441">
    <property type="expression patterns" value="baseline and differential"/>
</dbReference>
<dbReference type="GO" id="GO:0005739">
    <property type="term" value="C:mitochondrion"/>
    <property type="evidence" value="ECO:0007005"/>
    <property type="project" value="MGI"/>
</dbReference>
<dbReference type="GO" id="GO:0062181">
    <property type="term" value="F:1-alpha,25-dihydroxyvitamin D3 23-hydroxylase activity"/>
    <property type="evidence" value="ECO:0007669"/>
    <property type="project" value="Ensembl"/>
</dbReference>
<dbReference type="GO" id="GO:0030342">
    <property type="term" value="F:1-alpha,25-dihydroxyvitamin D3 24-hydroxylase activity"/>
    <property type="evidence" value="ECO:0000250"/>
    <property type="project" value="UniProtKB"/>
</dbReference>
<dbReference type="GO" id="GO:0062180">
    <property type="term" value="F:25-hydroxycholecalciferol-23-hydroxylase activity"/>
    <property type="evidence" value="ECO:0007669"/>
    <property type="project" value="Ensembl"/>
</dbReference>
<dbReference type="GO" id="GO:0008403">
    <property type="term" value="F:25-hydroxycholecalciferol-24-hydroxylase activity"/>
    <property type="evidence" value="ECO:0000315"/>
    <property type="project" value="MGI"/>
</dbReference>
<dbReference type="GO" id="GO:0020037">
    <property type="term" value="F:heme binding"/>
    <property type="evidence" value="ECO:0007669"/>
    <property type="project" value="InterPro"/>
</dbReference>
<dbReference type="GO" id="GO:0005506">
    <property type="term" value="F:iron ion binding"/>
    <property type="evidence" value="ECO:0007669"/>
    <property type="project" value="InterPro"/>
</dbReference>
<dbReference type="GO" id="GO:0070576">
    <property type="term" value="F:vitamin D 24-hydroxylase activity"/>
    <property type="evidence" value="ECO:0000250"/>
    <property type="project" value="UniProtKB"/>
</dbReference>
<dbReference type="GO" id="GO:0030343">
    <property type="term" value="F:vitamin D3 25-hydroxylase activity"/>
    <property type="evidence" value="ECO:0000250"/>
    <property type="project" value="UniProtKB"/>
</dbReference>
<dbReference type="GO" id="GO:0071305">
    <property type="term" value="P:cellular response to vitamin D"/>
    <property type="evidence" value="ECO:0007669"/>
    <property type="project" value="Ensembl"/>
</dbReference>
<dbReference type="GO" id="GO:0001649">
    <property type="term" value="P:osteoblast differentiation"/>
    <property type="evidence" value="ECO:0007669"/>
    <property type="project" value="Ensembl"/>
</dbReference>
<dbReference type="GO" id="GO:0042369">
    <property type="term" value="P:vitamin D catabolic process"/>
    <property type="evidence" value="ECO:0000250"/>
    <property type="project" value="UniProtKB"/>
</dbReference>
<dbReference type="GO" id="GO:0042359">
    <property type="term" value="P:vitamin D metabolic process"/>
    <property type="evidence" value="ECO:0000315"/>
    <property type="project" value="MGI"/>
</dbReference>
<dbReference type="CDD" id="cd20645">
    <property type="entry name" value="CYP24A1"/>
    <property type="match status" value="1"/>
</dbReference>
<dbReference type="FunFam" id="1.10.630.10:FF:000006">
    <property type="entry name" value="Cytochrome P450 302a1, mitochondrial"/>
    <property type="match status" value="1"/>
</dbReference>
<dbReference type="Gene3D" id="1.10.630.10">
    <property type="entry name" value="Cytochrome P450"/>
    <property type="match status" value="1"/>
</dbReference>
<dbReference type="InterPro" id="IPR050479">
    <property type="entry name" value="CYP11_CYP27_families"/>
</dbReference>
<dbReference type="InterPro" id="IPR001128">
    <property type="entry name" value="Cyt_P450"/>
</dbReference>
<dbReference type="InterPro" id="IPR017972">
    <property type="entry name" value="Cyt_P450_CS"/>
</dbReference>
<dbReference type="InterPro" id="IPR002401">
    <property type="entry name" value="Cyt_P450_E_grp-I"/>
</dbReference>
<dbReference type="InterPro" id="IPR036396">
    <property type="entry name" value="Cyt_P450_sf"/>
</dbReference>
<dbReference type="PANTHER" id="PTHR24279">
    <property type="entry name" value="CYTOCHROME P450"/>
    <property type="match status" value="1"/>
</dbReference>
<dbReference type="PANTHER" id="PTHR24279:SF125">
    <property type="entry name" value="CYTOCHROME P450 FAMILY 24 SUBFAMILY A MEMBER 1"/>
    <property type="match status" value="1"/>
</dbReference>
<dbReference type="Pfam" id="PF00067">
    <property type="entry name" value="p450"/>
    <property type="match status" value="1"/>
</dbReference>
<dbReference type="PRINTS" id="PR00463">
    <property type="entry name" value="EP450I"/>
</dbReference>
<dbReference type="PRINTS" id="PR00385">
    <property type="entry name" value="P450"/>
</dbReference>
<dbReference type="SUPFAM" id="SSF48264">
    <property type="entry name" value="Cytochrome P450"/>
    <property type="match status" value="1"/>
</dbReference>
<dbReference type="PROSITE" id="PS00086">
    <property type="entry name" value="CYTOCHROME_P450"/>
    <property type="match status" value="1"/>
</dbReference>
<comment type="function">
    <text evidence="1">A cytochrome P450 monooxygenase with a key role in vitamin D catabolism and calcium homeostasis. Via C24-oxidation pathway, catalyzes the inactivation of both the vitamin D precursor calcidiol (25-hydroxyvitamin D(3)) and the active hormone calcitriol (1-alpha,25-dihydroxyvitamin D(3)). With initial hydroxylation at C-24 (via C24-oxidation pathway), performs a sequential 6-step oxidation of calcitriol leading to the formation of the biliary metabolite calcitroic acid. Hydroxylates at C-24 or C-25 other vitamin D active metabolites, such as CYP11A1-derived secosteroids 20S-hydroxycholecalciferol and 20S,23-dihydroxycholecalciferol. Mechanistically, uses molecular oxygen inserting one oxygen atom into a substrate, and reducing the second into a water molecule, with two electrons provided by NADPH via FDXR/adrenodoxin reductase and FDX1/adrenodoxin.</text>
</comment>
<comment type="catalytic activity">
    <reaction evidence="1">
        <text>calcitriol + 2 reduced [adrenodoxin] + O2 + 2 H(+) = calcitetrol + 2 oxidized [adrenodoxin] + H2O</text>
        <dbReference type="Rhea" id="RHEA:24964"/>
        <dbReference type="Rhea" id="RHEA-COMP:9998"/>
        <dbReference type="Rhea" id="RHEA-COMP:9999"/>
        <dbReference type="ChEBI" id="CHEBI:15377"/>
        <dbReference type="ChEBI" id="CHEBI:15378"/>
        <dbReference type="ChEBI" id="CHEBI:15379"/>
        <dbReference type="ChEBI" id="CHEBI:17823"/>
        <dbReference type="ChEBI" id="CHEBI:33737"/>
        <dbReference type="ChEBI" id="CHEBI:33738"/>
        <dbReference type="ChEBI" id="CHEBI:47799"/>
        <dbReference type="EC" id="1.14.15.16"/>
    </reaction>
    <physiologicalReaction direction="left-to-right" evidence="1">
        <dbReference type="Rhea" id="RHEA:24965"/>
    </physiologicalReaction>
</comment>
<comment type="catalytic activity">
    <reaction evidence="1">
        <text>calcitetrol + 2 reduced [adrenodoxin] + O2 + 2 H(+) = (1S)-1,25-dihydroxy-24-oxocalciol + 2 oxidized [adrenodoxin] + 2 H2O</text>
        <dbReference type="Rhea" id="RHEA:24972"/>
        <dbReference type="Rhea" id="RHEA-COMP:9998"/>
        <dbReference type="Rhea" id="RHEA-COMP:9999"/>
        <dbReference type="ChEBI" id="CHEBI:15377"/>
        <dbReference type="ChEBI" id="CHEBI:15378"/>
        <dbReference type="ChEBI" id="CHEBI:15379"/>
        <dbReference type="ChEBI" id="CHEBI:33737"/>
        <dbReference type="ChEBI" id="CHEBI:33738"/>
        <dbReference type="ChEBI" id="CHEBI:47799"/>
        <dbReference type="ChEBI" id="CHEBI:47812"/>
        <dbReference type="EC" id="1.14.15.16"/>
    </reaction>
    <physiologicalReaction direction="left-to-right" evidence="1">
        <dbReference type="Rhea" id="RHEA:24973"/>
    </physiologicalReaction>
</comment>
<comment type="catalytic activity">
    <reaction evidence="1">
        <text>(1S)-1,25-dihydroxy-24-oxocalciol + 2 reduced [adrenodoxin] + O2 + 2 H(+) = (1S)-1,23,25-trihydroxy-24-oxocalciol + 2 oxidized [adrenodoxin] + H2O</text>
        <dbReference type="Rhea" id="RHEA:24976"/>
        <dbReference type="Rhea" id="RHEA-COMP:9998"/>
        <dbReference type="Rhea" id="RHEA-COMP:9999"/>
        <dbReference type="ChEBI" id="CHEBI:15377"/>
        <dbReference type="ChEBI" id="CHEBI:15378"/>
        <dbReference type="ChEBI" id="CHEBI:15379"/>
        <dbReference type="ChEBI" id="CHEBI:33737"/>
        <dbReference type="ChEBI" id="CHEBI:33738"/>
        <dbReference type="ChEBI" id="CHEBI:47812"/>
        <dbReference type="ChEBI" id="CHEBI:47813"/>
    </reaction>
    <physiologicalReaction direction="left-to-right" evidence="1">
        <dbReference type="Rhea" id="RHEA:24977"/>
    </physiologicalReaction>
</comment>
<comment type="catalytic activity">
    <reaction evidence="1">
        <text>(1S)-1,23-dihydroxy-24,25,26,27-tetranorcalciol + 2 reduced [adrenodoxin] + O2 + 2 H(+) = (1S)-1-hydroxy-23-oxo-24,25,26,27-tetranorcalciol + 2 oxidized [adrenodoxin] + 2 H2O</text>
        <dbReference type="Rhea" id="RHEA:24984"/>
        <dbReference type="Rhea" id="RHEA-COMP:9998"/>
        <dbReference type="Rhea" id="RHEA-COMP:9999"/>
        <dbReference type="ChEBI" id="CHEBI:15377"/>
        <dbReference type="ChEBI" id="CHEBI:15378"/>
        <dbReference type="ChEBI" id="CHEBI:15379"/>
        <dbReference type="ChEBI" id="CHEBI:33737"/>
        <dbReference type="ChEBI" id="CHEBI:33738"/>
        <dbReference type="ChEBI" id="CHEBI:47818"/>
        <dbReference type="ChEBI" id="CHEBI:47820"/>
    </reaction>
    <physiologicalReaction direction="left-to-right" evidence="1">
        <dbReference type="Rhea" id="RHEA:24985"/>
    </physiologicalReaction>
</comment>
<comment type="catalytic activity">
    <reaction evidence="1">
        <text>(1S)-1-hydroxy-23-oxo-24,25,26,27-tetranorcalciol + 2 reduced [adrenodoxin] + O2 + H(+) = calcitroate + 2 oxidized [adrenodoxin] + H2O</text>
        <dbReference type="Rhea" id="RHEA:24988"/>
        <dbReference type="Rhea" id="RHEA-COMP:9998"/>
        <dbReference type="Rhea" id="RHEA-COMP:9999"/>
        <dbReference type="ChEBI" id="CHEBI:15377"/>
        <dbReference type="ChEBI" id="CHEBI:15378"/>
        <dbReference type="ChEBI" id="CHEBI:15379"/>
        <dbReference type="ChEBI" id="CHEBI:33737"/>
        <dbReference type="ChEBI" id="CHEBI:33738"/>
        <dbReference type="ChEBI" id="CHEBI:47820"/>
        <dbReference type="ChEBI" id="CHEBI:58715"/>
    </reaction>
    <physiologicalReaction direction="left-to-right" evidence="1">
        <dbReference type="Rhea" id="RHEA:24989"/>
    </physiologicalReaction>
</comment>
<comment type="catalytic activity">
    <reaction evidence="1">
        <text>calcidiol + 2 reduced [adrenodoxin] + O2 + 2 H(+) = secalciferol + 2 oxidized [adrenodoxin] + H2O</text>
        <dbReference type="Rhea" id="RHEA:24968"/>
        <dbReference type="Rhea" id="RHEA-COMP:9998"/>
        <dbReference type="Rhea" id="RHEA-COMP:9999"/>
        <dbReference type="ChEBI" id="CHEBI:15377"/>
        <dbReference type="ChEBI" id="CHEBI:15378"/>
        <dbReference type="ChEBI" id="CHEBI:15379"/>
        <dbReference type="ChEBI" id="CHEBI:17933"/>
        <dbReference type="ChEBI" id="CHEBI:28818"/>
        <dbReference type="ChEBI" id="CHEBI:33737"/>
        <dbReference type="ChEBI" id="CHEBI:33738"/>
        <dbReference type="EC" id="1.14.15.16"/>
    </reaction>
    <physiologicalReaction direction="left-to-right" evidence="1">
        <dbReference type="Rhea" id="RHEA:24969"/>
    </physiologicalReaction>
</comment>
<comment type="catalytic activity">
    <reaction evidence="1">
        <text>secalciferol + 2 reduced [adrenodoxin] + O2 + 2 H(+) = 25-hydroxy-24-oxocalciol + 2 oxidized [adrenodoxin] + 2 H2O</text>
        <dbReference type="Rhea" id="RHEA:49196"/>
        <dbReference type="Rhea" id="RHEA-COMP:9998"/>
        <dbReference type="Rhea" id="RHEA-COMP:9999"/>
        <dbReference type="ChEBI" id="CHEBI:15377"/>
        <dbReference type="ChEBI" id="CHEBI:15378"/>
        <dbReference type="ChEBI" id="CHEBI:15379"/>
        <dbReference type="ChEBI" id="CHEBI:28818"/>
        <dbReference type="ChEBI" id="CHEBI:33737"/>
        <dbReference type="ChEBI" id="CHEBI:33738"/>
        <dbReference type="ChEBI" id="CHEBI:47805"/>
    </reaction>
    <physiologicalReaction direction="left-to-right" evidence="1">
        <dbReference type="Rhea" id="RHEA:49197"/>
    </physiologicalReaction>
</comment>
<comment type="catalytic activity">
    <reaction evidence="1">
        <text>25-hydroxy-24-oxocalciol + 2 reduced [adrenodoxin] + O2 + 2 H(+) = 23S,25-dihydroxy-24-oxocholecalciferol + 2 oxidized [adrenodoxin] + H2O</text>
        <dbReference type="Rhea" id="RHEA:49268"/>
        <dbReference type="Rhea" id="RHEA-COMP:9998"/>
        <dbReference type="Rhea" id="RHEA-COMP:9999"/>
        <dbReference type="ChEBI" id="CHEBI:15377"/>
        <dbReference type="ChEBI" id="CHEBI:15378"/>
        <dbReference type="ChEBI" id="CHEBI:15379"/>
        <dbReference type="ChEBI" id="CHEBI:33737"/>
        <dbReference type="ChEBI" id="CHEBI:33738"/>
        <dbReference type="ChEBI" id="CHEBI:47805"/>
        <dbReference type="ChEBI" id="CHEBI:90980"/>
    </reaction>
    <physiologicalReaction direction="left-to-right" evidence="1">
        <dbReference type="Rhea" id="RHEA:49269"/>
    </physiologicalReaction>
</comment>
<comment type="catalytic activity">
    <reaction evidence="1">
        <text>20S,23-dihydroxycholecalciferol + 2 reduced [adrenodoxin] + O2 + 2 H(+) = 20S,23,25-trihydroxycholecalciferol + 2 oxidized [adrenodoxin] + H2O</text>
        <dbReference type="Rhea" id="RHEA:49396"/>
        <dbReference type="Rhea" id="RHEA-COMP:9998"/>
        <dbReference type="Rhea" id="RHEA-COMP:9999"/>
        <dbReference type="ChEBI" id="CHEBI:15377"/>
        <dbReference type="ChEBI" id="CHEBI:15378"/>
        <dbReference type="ChEBI" id="CHEBI:15379"/>
        <dbReference type="ChEBI" id="CHEBI:33737"/>
        <dbReference type="ChEBI" id="CHEBI:33738"/>
        <dbReference type="ChEBI" id="CHEBI:91306"/>
        <dbReference type="ChEBI" id="CHEBI:91308"/>
    </reaction>
    <physiologicalReaction direction="left-to-right" evidence="1">
        <dbReference type="Rhea" id="RHEA:49397"/>
    </physiologicalReaction>
</comment>
<comment type="catalytic activity">
    <reaction evidence="1">
        <text>20S,23-dihydroxycholecalciferol + 2 reduced [adrenodoxin] + O2 + 2 H(+) = 20S,23,24-trihydroxycholecalciferol + 2 oxidized [adrenodoxin] + H2O</text>
        <dbReference type="Rhea" id="RHEA:49392"/>
        <dbReference type="Rhea" id="RHEA-COMP:9998"/>
        <dbReference type="Rhea" id="RHEA-COMP:9999"/>
        <dbReference type="ChEBI" id="CHEBI:15377"/>
        <dbReference type="ChEBI" id="CHEBI:15378"/>
        <dbReference type="ChEBI" id="CHEBI:15379"/>
        <dbReference type="ChEBI" id="CHEBI:33737"/>
        <dbReference type="ChEBI" id="CHEBI:33738"/>
        <dbReference type="ChEBI" id="CHEBI:91306"/>
        <dbReference type="ChEBI" id="CHEBI:91307"/>
    </reaction>
    <physiologicalReaction direction="left-to-right" evidence="1">
        <dbReference type="Rhea" id="RHEA:49393"/>
    </physiologicalReaction>
</comment>
<comment type="catalytic activity">
    <reaction evidence="1">
        <text>20S-hydroxycholecalciferol + 2 reduced [adrenodoxin] + O2 + 2 H(+) = 20S,25-dihydroxycholecalciferol + 2 oxidized [adrenodoxin] + H2O</text>
        <dbReference type="Rhea" id="RHEA:49212"/>
        <dbReference type="Rhea" id="RHEA-COMP:9998"/>
        <dbReference type="Rhea" id="RHEA-COMP:9999"/>
        <dbReference type="ChEBI" id="CHEBI:15377"/>
        <dbReference type="ChEBI" id="CHEBI:15378"/>
        <dbReference type="ChEBI" id="CHEBI:15379"/>
        <dbReference type="ChEBI" id="CHEBI:33737"/>
        <dbReference type="ChEBI" id="CHEBI:33738"/>
        <dbReference type="ChEBI" id="CHEBI:90983"/>
        <dbReference type="ChEBI" id="CHEBI:90984"/>
    </reaction>
    <physiologicalReaction direction="left-to-right" evidence="1">
        <dbReference type="Rhea" id="RHEA:49213"/>
    </physiologicalReaction>
</comment>
<comment type="catalytic activity">
    <reaction evidence="1">
        <text>20S-hydroxycholecalciferol + 2 reduced [adrenodoxin] + O2 + 2 H(+) = 20S,24S-dihydroxycholecalciferol + 2 oxidized [adrenodoxin] + H2O</text>
        <dbReference type="Rhea" id="RHEA:49208"/>
        <dbReference type="Rhea" id="RHEA-COMP:9998"/>
        <dbReference type="Rhea" id="RHEA-COMP:9999"/>
        <dbReference type="ChEBI" id="CHEBI:15377"/>
        <dbReference type="ChEBI" id="CHEBI:15378"/>
        <dbReference type="ChEBI" id="CHEBI:15379"/>
        <dbReference type="ChEBI" id="CHEBI:33737"/>
        <dbReference type="ChEBI" id="CHEBI:33738"/>
        <dbReference type="ChEBI" id="CHEBI:90983"/>
        <dbReference type="ChEBI" id="CHEBI:90986"/>
    </reaction>
    <physiologicalReaction direction="left-to-right" evidence="1">
        <dbReference type="Rhea" id="RHEA:49209"/>
    </physiologicalReaction>
</comment>
<comment type="catalytic activity">
    <reaction evidence="1">
        <text>20S-hydroxycholecalciferol + 2 reduced [adrenodoxin] + O2 + 2 H(+) = 20S,24R-dihydroxycholecalciferol + 2 oxidized [adrenodoxin] + H2O</text>
        <dbReference type="Rhea" id="RHEA:49204"/>
        <dbReference type="Rhea" id="RHEA-COMP:9998"/>
        <dbReference type="Rhea" id="RHEA-COMP:9999"/>
        <dbReference type="ChEBI" id="CHEBI:15377"/>
        <dbReference type="ChEBI" id="CHEBI:15378"/>
        <dbReference type="ChEBI" id="CHEBI:15379"/>
        <dbReference type="ChEBI" id="CHEBI:33737"/>
        <dbReference type="ChEBI" id="CHEBI:33738"/>
        <dbReference type="ChEBI" id="CHEBI:90983"/>
        <dbReference type="ChEBI" id="CHEBI:90985"/>
    </reaction>
    <physiologicalReaction direction="left-to-right" evidence="1">
        <dbReference type="Rhea" id="RHEA:49205"/>
    </physiologicalReaction>
</comment>
<comment type="cofactor">
    <cofactor evidence="1">
        <name>heme</name>
        <dbReference type="ChEBI" id="CHEBI:30413"/>
    </cofactor>
</comment>
<comment type="subcellular location">
    <subcellularLocation>
        <location evidence="1">Mitochondrion</location>
    </subcellularLocation>
</comment>
<comment type="induction">
    <text evidence="2">By 1,25-dihydroxyvitamin D(3) in kidney.</text>
</comment>
<comment type="similarity">
    <text evidence="3">Belongs to the cytochrome P450 family.</text>
</comment>
<sequence>MSCPIDKRRPLIAFLRRLRDLGQPPRSVTSKAHVKRAPKEVPLCPLMTDGETRNVTSLPGPTNWPLLGSLLEIFWKGGLKKQHDTLAEYHKKYGQIFRMKLGSFDSVHLGSPSLLEALYRTESAHPQRLEIKPWKAYRDHRNEAYGLMILEGQEWQRVRSAFQKKLMKPVEIMKLDKKINEVLADFMGQIDELRDERGRIQDLYSELNKWSFESICLVLYEKRFGLLQKDTEEEALTFIAAIKTMMSTFGKMMVTPVELHKRLNTKVWQAHTLAWDTIFKSVKPCIDHRLERYSQQPGADFLCDIYQQDHLSKKELYAAVTELQLAAVETTANSLMWILYNLSRNPQVQQRLLREIQSVLPDNQTPRAEDVRNMPYLKACLKESMRLTPSVPFTTRTLDKPTVLGEYTLPKGTVLTLNTQVLGSSEDNFEDADKFRPERWLEKEKKINPFAHLPFGVGKRMCIGRRLAELQLHLALCWIIQKYNIVATDSEPVEMLHLGILVPSRELPIAFCPR</sequence>